<name>AGUA2_LISMO</name>
<protein>
    <recommendedName>
        <fullName evidence="1">Putative agmatine deiminase 2</fullName>
        <ecNumber evidence="1">3.5.3.12</ecNumber>
    </recommendedName>
    <alternativeName>
        <fullName evidence="1">Agmatine iminohydrolase 2</fullName>
    </alternativeName>
</protein>
<accession>Q8YAS3</accession>
<sequence>MGQLKGLPVEDGFRMPGEYEPHIGCFMIWPERPDNWRLGGKPAQQNYKEVAVAISNFEPVTMFVSPNQYKNARKELPDTIRVIEMSNDDAWIRDYGPSFLVDDKGDMRGVDWGFNAWGGLLDGLYFPWDKDNQIAKKVCELERIDYYSQKDFILEGCSIHVDGEGTLVTTEECLLSEGRNPNLTKIEIEQTLKKYFHAQKVIWLKHGFYLDETNGHVDNIFNFVAPGEVVLSWTDNKSDPQYEISRECYDILANKTDAKGRTFIIHKLHCPDPVLITQTESEGVEAINGTFPRQAGDRLAASYVNYYTANGAIIFPLFDDPKDKDAQELLEKLYPDRKIVGIKAREILLGGGNIHCITQHLPDKSTIRE</sequence>
<proteinExistence type="inferred from homology"/>
<comment type="catalytic activity">
    <reaction evidence="1">
        <text>agmatine + H2O = N-carbamoylputrescine + NH4(+)</text>
        <dbReference type="Rhea" id="RHEA:18037"/>
        <dbReference type="ChEBI" id="CHEBI:15377"/>
        <dbReference type="ChEBI" id="CHEBI:28938"/>
        <dbReference type="ChEBI" id="CHEBI:58145"/>
        <dbReference type="ChEBI" id="CHEBI:58318"/>
        <dbReference type="EC" id="3.5.3.12"/>
    </reaction>
</comment>
<comment type="similarity">
    <text evidence="1">Belongs to the agmatine deiminase family.</text>
</comment>
<evidence type="ECO:0000255" key="1">
    <source>
        <dbReference type="HAMAP-Rule" id="MF_01841"/>
    </source>
</evidence>
<organism>
    <name type="scientific">Listeria monocytogenes serovar 1/2a (strain ATCC BAA-679 / EGD-e)</name>
    <dbReference type="NCBI Taxonomy" id="169963"/>
    <lineage>
        <taxon>Bacteria</taxon>
        <taxon>Bacillati</taxon>
        <taxon>Bacillota</taxon>
        <taxon>Bacilli</taxon>
        <taxon>Bacillales</taxon>
        <taxon>Listeriaceae</taxon>
        <taxon>Listeria</taxon>
    </lineage>
</organism>
<keyword id="KW-0378">Hydrolase</keyword>
<keyword id="KW-1185">Reference proteome</keyword>
<gene>
    <name evidence="1" type="primary">aguA2</name>
    <name type="ordered locus">lmo0040</name>
</gene>
<reference key="1">
    <citation type="journal article" date="2001" name="Science">
        <title>Comparative genomics of Listeria species.</title>
        <authorList>
            <person name="Glaser P."/>
            <person name="Frangeul L."/>
            <person name="Buchrieser C."/>
            <person name="Rusniok C."/>
            <person name="Amend A."/>
            <person name="Baquero F."/>
            <person name="Berche P."/>
            <person name="Bloecker H."/>
            <person name="Brandt P."/>
            <person name="Chakraborty T."/>
            <person name="Charbit A."/>
            <person name="Chetouani F."/>
            <person name="Couve E."/>
            <person name="de Daruvar A."/>
            <person name="Dehoux P."/>
            <person name="Domann E."/>
            <person name="Dominguez-Bernal G."/>
            <person name="Duchaud E."/>
            <person name="Durant L."/>
            <person name="Dussurget O."/>
            <person name="Entian K.-D."/>
            <person name="Fsihi H."/>
            <person name="Garcia-del Portillo F."/>
            <person name="Garrido P."/>
            <person name="Gautier L."/>
            <person name="Goebel W."/>
            <person name="Gomez-Lopez N."/>
            <person name="Hain T."/>
            <person name="Hauf J."/>
            <person name="Jackson D."/>
            <person name="Jones L.-M."/>
            <person name="Kaerst U."/>
            <person name="Kreft J."/>
            <person name="Kuhn M."/>
            <person name="Kunst F."/>
            <person name="Kurapkat G."/>
            <person name="Madueno E."/>
            <person name="Maitournam A."/>
            <person name="Mata Vicente J."/>
            <person name="Ng E."/>
            <person name="Nedjari H."/>
            <person name="Nordsiek G."/>
            <person name="Novella S."/>
            <person name="de Pablos B."/>
            <person name="Perez-Diaz J.-C."/>
            <person name="Purcell R."/>
            <person name="Remmel B."/>
            <person name="Rose M."/>
            <person name="Schlueter T."/>
            <person name="Simoes N."/>
            <person name="Tierrez A."/>
            <person name="Vazquez-Boland J.-A."/>
            <person name="Voss H."/>
            <person name="Wehland J."/>
            <person name="Cossart P."/>
        </authorList>
    </citation>
    <scope>NUCLEOTIDE SEQUENCE [LARGE SCALE GENOMIC DNA]</scope>
    <source>
        <strain>ATCC BAA-679 / EGD-e</strain>
    </source>
</reference>
<dbReference type="EC" id="3.5.3.12" evidence="1"/>
<dbReference type="EMBL" id="AL591973">
    <property type="protein sequence ID" value="CAC98255.1"/>
    <property type="molecule type" value="Genomic_DNA"/>
</dbReference>
<dbReference type="PIR" id="AI1079">
    <property type="entry name" value="AI1079"/>
</dbReference>
<dbReference type="RefSeq" id="NP_463573.1">
    <property type="nucleotide sequence ID" value="NC_003210.1"/>
</dbReference>
<dbReference type="SMR" id="Q8YAS3"/>
<dbReference type="STRING" id="169963.gene:17592675"/>
<dbReference type="PaxDb" id="169963-lmo0040"/>
<dbReference type="EnsemblBacteria" id="CAC98255">
    <property type="protein sequence ID" value="CAC98255"/>
    <property type="gene ID" value="CAC98255"/>
</dbReference>
<dbReference type="GeneID" id="985194"/>
<dbReference type="KEGG" id="lmo:lmo0040"/>
<dbReference type="PATRIC" id="fig|169963.11.peg.41"/>
<dbReference type="eggNOG" id="COG2957">
    <property type="taxonomic scope" value="Bacteria"/>
</dbReference>
<dbReference type="HOGENOM" id="CLU_037682_1_0_9"/>
<dbReference type="OrthoDB" id="9808013at2"/>
<dbReference type="PhylomeDB" id="Q8YAS3"/>
<dbReference type="BioCyc" id="LMON169963:LMO0040-MONOMER"/>
<dbReference type="Proteomes" id="UP000000817">
    <property type="component" value="Chromosome"/>
</dbReference>
<dbReference type="GO" id="GO:0047632">
    <property type="term" value="F:agmatine deiminase activity"/>
    <property type="evidence" value="ECO:0007669"/>
    <property type="project" value="UniProtKB-UniRule"/>
</dbReference>
<dbReference type="GO" id="GO:0004668">
    <property type="term" value="F:protein-arginine deiminase activity"/>
    <property type="evidence" value="ECO:0007669"/>
    <property type="project" value="InterPro"/>
</dbReference>
<dbReference type="GO" id="GO:0009446">
    <property type="term" value="P:putrescine biosynthetic process"/>
    <property type="evidence" value="ECO:0007669"/>
    <property type="project" value="InterPro"/>
</dbReference>
<dbReference type="Gene3D" id="3.75.10.10">
    <property type="entry name" value="L-arginine/glycine Amidinotransferase, Chain A"/>
    <property type="match status" value="1"/>
</dbReference>
<dbReference type="HAMAP" id="MF_01841">
    <property type="entry name" value="Agmatine_deimin"/>
    <property type="match status" value="1"/>
</dbReference>
<dbReference type="InterPro" id="IPR017754">
    <property type="entry name" value="Agmatine_deiminase"/>
</dbReference>
<dbReference type="InterPro" id="IPR007466">
    <property type="entry name" value="Peptidyl-Arg-deiminase_porph"/>
</dbReference>
<dbReference type="NCBIfam" id="TIGR03380">
    <property type="entry name" value="agmatine_aguA"/>
    <property type="match status" value="1"/>
</dbReference>
<dbReference type="NCBIfam" id="NF010070">
    <property type="entry name" value="PRK13551.1"/>
    <property type="match status" value="1"/>
</dbReference>
<dbReference type="PANTHER" id="PTHR31377">
    <property type="entry name" value="AGMATINE DEIMINASE-RELATED"/>
    <property type="match status" value="1"/>
</dbReference>
<dbReference type="PANTHER" id="PTHR31377:SF0">
    <property type="entry name" value="AGMATINE DEIMINASE-RELATED"/>
    <property type="match status" value="1"/>
</dbReference>
<dbReference type="Pfam" id="PF04371">
    <property type="entry name" value="PAD_porph"/>
    <property type="match status" value="1"/>
</dbReference>
<dbReference type="SUPFAM" id="SSF55909">
    <property type="entry name" value="Pentein"/>
    <property type="match status" value="1"/>
</dbReference>
<feature type="chain" id="PRO_0000194334" description="Putative agmatine deiminase 2">
    <location>
        <begin position="1"/>
        <end position="369"/>
    </location>
</feature>
<feature type="active site" description="Amidino-cysteine intermediate" evidence="1">
    <location>
        <position position="356"/>
    </location>
</feature>